<protein>
    <recommendedName>
        <fullName>Cytochrome b</fullName>
    </recommendedName>
    <alternativeName>
        <fullName>Complex III subunit 3</fullName>
    </alternativeName>
    <alternativeName>
        <fullName>Complex III subunit III</fullName>
    </alternativeName>
    <alternativeName>
        <fullName>Cytochrome b-c1 complex subunit 3</fullName>
    </alternativeName>
    <alternativeName>
        <fullName>Ubiquinol-cytochrome-c reductase complex cytochrome b subunit</fullName>
    </alternativeName>
</protein>
<gene>
    <name type="primary">MT-CYB</name>
    <name type="synonym">COB</name>
    <name type="synonym">CYTB</name>
    <name type="synonym">MTCYB</name>
</gene>
<proteinExistence type="inferred from homology"/>
<organism>
    <name type="scientific">Lepus tolai</name>
    <name type="common">Tolai hare</name>
    <dbReference type="NCBI Taxonomy" id="283924"/>
    <lineage>
        <taxon>Eukaryota</taxon>
        <taxon>Metazoa</taxon>
        <taxon>Chordata</taxon>
        <taxon>Craniata</taxon>
        <taxon>Vertebrata</taxon>
        <taxon>Euteleostomi</taxon>
        <taxon>Mammalia</taxon>
        <taxon>Eutheria</taxon>
        <taxon>Euarchontoglires</taxon>
        <taxon>Glires</taxon>
        <taxon>Lagomorpha</taxon>
        <taxon>Leporidae</taxon>
        <taxon>Lepus</taxon>
    </lineage>
</organism>
<sequence>MTNIRKTHPLLKIVNHSLIDLPAPSNISAWWNFGSLLGLCLMIQVLTGLFLAMHYTSDTATAFSSVTHICRDVNYGWLIRYLHANGASMFFICLYMHVGRGIYYGSYTYLETWNIGIILLFTVMATAFMGYVLPWGQMSFWGATVITNLLSAIPYIGTTLVEWIWGGFSVDKATLTRFFAFHFILPFIIAALVMIHLLFLHETGSNNPSGIPSDSDKIPFHPYYTIKDLLGFLMLILLLMLLVLFSPDLLGDPDNYTPANPLNTPPHIKPEWYFLFAYAILRSIPNKLGGVLALVMSILILAIIPLLHMSKQRSMMFRPISQVLFWILVADLLTLTWIGGQPVEHPFITIGQVASILYFSIILILMPLASLIENKILKW</sequence>
<reference key="1">
    <citation type="submission" date="2004-06" db="EMBL/GenBank/DDBJ databases">
        <title>Molecular phylogeny and evolution of Lepus hares in China.</title>
        <authorList>
            <person name="Xiang Y."/>
            <person name="Yang Q.S."/>
            <person name="Xia L."/>
        </authorList>
    </citation>
    <scope>NUCLEOTIDE SEQUENCE [GENOMIC DNA]</scope>
</reference>
<evidence type="ECO:0000250" key="1"/>
<evidence type="ECO:0000250" key="2">
    <source>
        <dbReference type="UniProtKB" id="P00157"/>
    </source>
</evidence>
<evidence type="ECO:0000255" key="3">
    <source>
        <dbReference type="PROSITE-ProRule" id="PRU00967"/>
    </source>
</evidence>
<evidence type="ECO:0000255" key="4">
    <source>
        <dbReference type="PROSITE-ProRule" id="PRU00968"/>
    </source>
</evidence>
<geneLocation type="mitochondrion"/>
<dbReference type="EMBL" id="AY649616">
    <property type="protein sequence ID" value="AAT90524.1"/>
    <property type="molecule type" value="Genomic_DNA"/>
</dbReference>
<dbReference type="SMR" id="Q692W3"/>
<dbReference type="GO" id="GO:0005743">
    <property type="term" value="C:mitochondrial inner membrane"/>
    <property type="evidence" value="ECO:0007669"/>
    <property type="project" value="UniProtKB-SubCell"/>
</dbReference>
<dbReference type="GO" id="GO:0045275">
    <property type="term" value="C:respiratory chain complex III"/>
    <property type="evidence" value="ECO:0007669"/>
    <property type="project" value="InterPro"/>
</dbReference>
<dbReference type="GO" id="GO:0046872">
    <property type="term" value="F:metal ion binding"/>
    <property type="evidence" value="ECO:0007669"/>
    <property type="project" value="UniProtKB-KW"/>
</dbReference>
<dbReference type="GO" id="GO:0008121">
    <property type="term" value="F:ubiquinol-cytochrome-c reductase activity"/>
    <property type="evidence" value="ECO:0007669"/>
    <property type="project" value="InterPro"/>
</dbReference>
<dbReference type="GO" id="GO:0006122">
    <property type="term" value="P:mitochondrial electron transport, ubiquinol to cytochrome c"/>
    <property type="evidence" value="ECO:0007669"/>
    <property type="project" value="TreeGrafter"/>
</dbReference>
<dbReference type="CDD" id="cd00290">
    <property type="entry name" value="cytochrome_b_C"/>
    <property type="match status" value="1"/>
</dbReference>
<dbReference type="CDD" id="cd00284">
    <property type="entry name" value="Cytochrome_b_N"/>
    <property type="match status" value="1"/>
</dbReference>
<dbReference type="FunFam" id="1.20.810.10:FF:000002">
    <property type="entry name" value="Cytochrome b"/>
    <property type="match status" value="1"/>
</dbReference>
<dbReference type="Gene3D" id="1.20.810.10">
    <property type="entry name" value="Cytochrome Bc1 Complex, Chain C"/>
    <property type="match status" value="1"/>
</dbReference>
<dbReference type="InterPro" id="IPR005798">
    <property type="entry name" value="Cyt_b/b6_C"/>
</dbReference>
<dbReference type="InterPro" id="IPR036150">
    <property type="entry name" value="Cyt_b/b6_C_sf"/>
</dbReference>
<dbReference type="InterPro" id="IPR005797">
    <property type="entry name" value="Cyt_b/b6_N"/>
</dbReference>
<dbReference type="InterPro" id="IPR027387">
    <property type="entry name" value="Cytb/b6-like_sf"/>
</dbReference>
<dbReference type="InterPro" id="IPR030689">
    <property type="entry name" value="Cytochrome_b"/>
</dbReference>
<dbReference type="InterPro" id="IPR048260">
    <property type="entry name" value="Cytochrome_b_C_euk/bac"/>
</dbReference>
<dbReference type="InterPro" id="IPR048259">
    <property type="entry name" value="Cytochrome_b_N_euk/bac"/>
</dbReference>
<dbReference type="InterPro" id="IPR016174">
    <property type="entry name" value="Di-haem_cyt_TM"/>
</dbReference>
<dbReference type="PANTHER" id="PTHR19271">
    <property type="entry name" value="CYTOCHROME B"/>
    <property type="match status" value="1"/>
</dbReference>
<dbReference type="PANTHER" id="PTHR19271:SF16">
    <property type="entry name" value="CYTOCHROME B"/>
    <property type="match status" value="1"/>
</dbReference>
<dbReference type="Pfam" id="PF00032">
    <property type="entry name" value="Cytochrom_B_C"/>
    <property type="match status" value="1"/>
</dbReference>
<dbReference type="Pfam" id="PF00033">
    <property type="entry name" value="Cytochrome_B"/>
    <property type="match status" value="1"/>
</dbReference>
<dbReference type="PIRSF" id="PIRSF038885">
    <property type="entry name" value="COB"/>
    <property type="match status" value="1"/>
</dbReference>
<dbReference type="SUPFAM" id="SSF81648">
    <property type="entry name" value="a domain/subunit of cytochrome bc1 complex (Ubiquinol-cytochrome c reductase)"/>
    <property type="match status" value="1"/>
</dbReference>
<dbReference type="SUPFAM" id="SSF81342">
    <property type="entry name" value="Transmembrane di-heme cytochromes"/>
    <property type="match status" value="1"/>
</dbReference>
<dbReference type="PROSITE" id="PS51003">
    <property type="entry name" value="CYTB_CTER"/>
    <property type="match status" value="1"/>
</dbReference>
<dbReference type="PROSITE" id="PS51002">
    <property type="entry name" value="CYTB_NTER"/>
    <property type="match status" value="1"/>
</dbReference>
<feature type="chain" id="PRO_0000061114" description="Cytochrome b">
    <location>
        <begin position="1"/>
        <end position="379"/>
    </location>
</feature>
<feature type="transmembrane region" description="Helical" evidence="2">
    <location>
        <begin position="33"/>
        <end position="53"/>
    </location>
</feature>
<feature type="transmembrane region" description="Helical" evidence="2">
    <location>
        <begin position="77"/>
        <end position="98"/>
    </location>
</feature>
<feature type="transmembrane region" description="Helical" evidence="2">
    <location>
        <begin position="113"/>
        <end position="133"/>
    </location>
</feature>
<feature type="transmembrane region" description="Helical" evidence="2">
    <location>
        <begin position="178"/>
        <end position="198"/>
    </location>
</feature>
<feature type="transmembrane region" description="Helical" evidence="2">
    <location>
        <begin position="226"/>
        <end position="246"/>
    </location>
</feature>
<feature type="transmembrane region" description="Helical" evidence="2">
    <location>
        <begin position="288"/>
        <end position="308"/>
    </location>
</feature>
<feature type="transmembrane region" description="Helical" evidence="2">
    <location>
        <begin position="320"/>
        <end position="340"/>
    </location>
</feature>
<feature type="transmembrane region" description="Helical" evidence="2">
    <location>
        <begin position="347"/>
        <end position="367"/>
    </location>
</feature>
<feature type="binding site" description="axial binding residue" evidence="2">
    <location>
        <position position="83"/>
    </location>
    <ligand>
        <name>heme b</name>
        <dbReference type="ChEBI" id="CHEBI:60344"/>
        <label>b562</label>
    </ligand>
    <ligandPart>
        <name>Fe</name>
        <dbReference type="ChEBI" id="CHEBI:18248"/>
    </ligandPart>
</feature>
<feature type="binding site" description="axial binding residue" evidence="2">
    <location>
        <position position="97"/>
    </location>
    <ligand>
        <name>heme b</name>
        <dbReference type="ChEBI" id="CHEBI:60344"/>
        <label>b566</label>
    </ligand>
    <ligandPart>
        <name>Fe</name>
        <dbReference type="ChEBI" id="CHEBI:18248"/>
    </ligandPart>
</feature>
<feature type="binding site" description="axial binding residue" evidence="2">
    <location>
        <position position="182"/>
    </location>
    <ligand>
        <name>heme b</name>
        <dbReference type="ChEBI" id="CHEBI:60344"/>
        <label>b562</label>
    </ligand>
    <ligandPart>
        <name>Fe</name>
        <dbReference type="ChEBI" id="CHEBI:18248"/>
    </ligandPart>
</feature>
<feature type="binding site" description="axial binding residue" evidence="2">
    <location>
        <position position="196"/>
    </location>
    <ligand>
        <name>heme b</name>
        <dbReference type="ChEBI" id="CHEBI:60344"/>
        <label>b566</label>
    </ligand>
    <ligandPart>
        <name>Fe</name>
        <dbReference type="ChEBI" id="CHEBI:18248"/>
    </ligandPart>
</feature>
<feature type="binding site" evidence="2">
    <location>
        <position position="201"/>
    </location>
    <ligand>
        <name>a ubiquinone</name>
        <dbReference type="ChEBI" id="CHEBI:16389"/>
    </ligand>
</feature>
<accession>Q692W3</accession>
<comment type="function">
    <text evidence="2">Component of the ubiquinol-cytochrome c reductase complex (complex III or cytochrome b-c1 complex) that is part of the mitochondrial respiratory chain. The b-c1 complex mediates electron transfer from ubiquinol to cytochrome c. Contributes to the generation of a proton gradient across the mitochondrial membrane that is then used for ATP synthesis.</text>
</comment>
<comment type="cofactor">
    <cofactor evidence="2">
        <name>heme b</name>
        <dbReference type="ChEBI" id="CHEBI:60344"/>
    </cofactor>
    <text evidence="2">Binds 2 heme b groups non-covalently.</text>
</comment>
<comment type="subunit">
    <text evidence="2">The cytochrome bc1 complex contains 11 subunits: 3 respiratory subunits (MT-CYB, CYC1 and UQCRFS1), 2 core proteins (UQCRC1 and UQCRC2) and 6 low-molecular weight proteins (UQCRH/QCR6, UQCRB/QCR7, UQCRQ/QCR8, UQCR10/QCR9, UQCR11/QCR10 and a cleavage product of UQCRFS1). This cytochrome bc1 complex then forms a dimer.</text>
</comment>
<comment type="subcellular location">
    <subcellularLocation>
        <location evidence="2">Mitochondrion inner membrane</location>
        <topology evidence="2">Multi-pass membrane protein</topology>
    </subcellularLocation>
</comment>
<comment type="miscellaneous">
    <text evidence="1">Heme 1 (or BL or b562) is low-potential and absorbs at about 562 nm, and heme 2 (or BH or b566) is high-potential and absorbs at about 566 nm.</text>
</comment>
<comment type="similarity">
    <text evidence="3 4">Belongs to the cytochrome b family.</text>
</comment>
<comment type="caution">
    <text evidence="2">The full-length protein contains only eight transmembrane helices, not nine as predicted by bioinformatics tools.</text>
</comment>
<keyword id="KW-0249">Electron transport</keyword>
<keyword id="KW-0349">Heme</keyword>
<keyword id="KW-0408">Iron</keyword>
<keyword id="KW-0472">Membrane</keyword>
<keyword id="KW-0479">Metal-binding</keyword>
<keyword id="KW-0496">Mitochondrion</keyword>
<keyword id="KW-0999">Mitochondrion inner membrane</keyword>
<keyword id="KW-0679">Respiratory chain</keyword>
<keyword id="KW-0812">Transmembrane</keyword>
<keyword id="KW-1133">Transmembrane helix</keyword>
<keyword id="KW-0813">Transport</keyword>
<keyword id="KW-0830">Ubiquinone</keyword>
<name>CYB_LEPTL</name>